<protein>
    <recommendedName>
        <fullName evidence="1">UvrABC system protein B</fullName>
        <shortName evidence="1">Protein UvrB</shortName>
    </recommendedName>
    <alternativeName>
        <fullName evidence="1">Excinuclease ABC subunit B</fullName>
    </alternativeName>
</protein>
<proteinExistence type="inferred from homology"/>
<name>UVRB_ACTP2</name>
<sequence length="673" mass="76678">MSKQGKPFILHSPFKPSGDQPSAIAKLTEGLNDGLAHQTLLGVTGSGKTFTIANVIAQLNRPAMLLAPNKTLAAQLYAEMKAFFPENAVEYFVSYYDYYQPEAYVPSSDTFIEKDASINEQIEQMRLSATKSFLERRDTIVVASVSAIYGLGDVDAYMQMMLHLQLGAIIDQREILARLAELQYTRNDQAFQRSTFRVRGEVIDIFPAESDEIALRVELFDDEIESLSLFDPLTGHSLGKVPRYTIYPKTHYVTPRERILNAIEEIKQELVERREYFIKENKLLEEQRITQRTQFDIEMMNELGYCSGIENYSRYLSGRKEGEPPPTLFDYMPADGLLIIDESHVTVPQIGGMYRGDRARKETLVQYGFRLPSALDNRPLRFEEFERLAPQTIYVSATPGNYELEKSNGDVVDQVVRPTGLLDPIIEVRPVATQVDDVLSEIHKRVAVDERVLITTLTKKMAEDLTDYLDEHGVRVRYLHSDIDTVERVEIIHDLRMGMFDVLVGINLLREGLDMPEVSLVAILDADKEGFLRSERSLIQTIGRAARNLNGKAILYGDRITNSMQKAITETERRREKQQKYNEEHGITPQALNKKVGELLDIGQTDKPKRGKQAVKVEEKSANTYKPKSRKELEKELKQLEQQMRDFAKDLEFEKAAAVRDKIGQLKAVLLEV</sequence>
<gene>
    <name evidence="1" type="primary">uvrB</name>
    <name type="ordered locus">APL_0667</name>
</gene>
<dbReference type="EMBL" id="CP000569">
    <property type="protein sequence ID" value="ABN73767.1"/>
    <property type="molecule type" value="Genomic_DNA"/>
</dbReference>
<dbReference type="RefSeq" id="WP_009874701.1">
    <property type="nucleotide sequence ID" value="NC_009053.1"/>
</dbReference>
<dbReference type="SMR" id="A3N031"/>
<dbReference type="STRING" id="416269.APL_0667"/>
<dbReference type="EnsemblBacteria" id="ABN73767">
    <property type="protein sequence ID" value="ABN73767"/>
    <property type="gene ID" value="APL_0667"/>
</dbReference>
<dbReference type="KEGG" id="apl:APL_0667"/>
<dbReference type="PATRIC" id="fig|416269.6.peg.698"/>
<dbReference type="eggNOG" id="COG0556">
    <property type="taxonomic scope" value="Bacteria"/>
</dbReference>
<dbReference type="HOGENOM" id="CLU_009621_2_1_6"/>
<dbReference type="Proteomes" id="UP000001432">
    <property type="component" value="Chromosome"/>
</dbReference>
<dbReference type="GO" id="GO:0005737">
    <property type="term" value="C:cytoplasm"/>
    <property type="evidence" value="ECO:0007669"/>
    <property type="project" value="UniProtKB-SubCell"/>
</dbReference>
<dbReference type="GO" id="GO:0009380">
    <property type="term" value="C:excinuclease repair complex"/>
    <property type="evidence" value="ECO:0007669"/>
    <property type="project" value="InterPro"/>
</dbReference>
<dbReference type="GO" id="GO:0005524">
    <property type="term" value="F:ATP binding"/>
    <property type="evidence" value="ECO:0007669"/>
    <property type="project" value="UniProtKB-UniRule"/>
</dbReference>
<dbReference type="GO" id="GO:0016887">
    <property type="term" value="F:ATP hydrolysis activity"/>
    <property type="evidence" value="ECO:0007669"/>
    <property type="project" value="InterPro"/>
</dbReference>
<dbReference type="GO" id="GO:0003677">
    <property type="term" value="F:DNA binding"/>
    <property type="evidence" value="ECO:0007669"/>
    <property type="project" value="UniProtKB-UniRule"/>
</dbReference>
<dbReference type="GO" id="GO:0009381">
    <property type="term" value="F:excinuclease ABC activity"/>
    <property type="evidence" value="ECO:0007669"/>
    <property type="project" value="UniProtKB-UniRule"/>
</dbReference>
<dbReference type="GO" id="GO:0004386">
    <property type="term" value="F:helicase activity"/>
    <property type="evidence" value="ECO:0007669"/>
    <property type="project" value="UniProtKB-KW"/>
</dbReference>
<dbReference type="GO" id="GO:0006289">
    <property type="term" value="P:nucleotide-excision repair"/>
    <property type="evidence" value="ECO:0007669"/>
    <property type="project" value="UniProtKB-UniRule"/>
</dbReference>
<dbReference type="GO" id="GO:0009432">
    <property type="term" value="P:SOS response"/>
    <property type="evidence" value="ECO:0007669"/>
    <property type="project" value="UniProtKB-UniRule"/>
</dbReference>
<dbReference type="CDD" id="cd17916">
    <property type="entry name" value="DEXHc_UvrB"/>
    <property type="match status" value="1"/>
</dbReference>
<dbReference type="CDD" id="cd18790">
    <property type="entry name" value="SF2_C_UvrB"/>
    <property type="match status" value="1"/>
</dbReference>
<dbReference type="FunFam" id="3.40.50.300:FF:000257">
    <property type="entry name" value="UvrABC system protein B"/>
    <property type="match status" value="1"/>
</dbReference>
<dbReference type="FunFam" id="3.40.50.300:FF:000477">
    <property type="entry name" value="UvrABC system protein B"/>
    <property type="match status" value="1"/>
</dbReference>
<dbReference type="Gene3D" id="3.40.50.300">
    <property type="entry name" value="P-loop containing nucleotide triphosphate hydrolases"/>
    <property type="match status" value="3"/>
</dbReference>
<dbReference type="Gene3D" id="4.10.860.10">
    <property type="entry name" value="UVR domain"/>
    <property type="match status" value="1"/>
</dbReference>
<dbReference type="HAMAP" id="MF_00204">
    <property type="entry name" value="UvrB"/>
    <property type="match status" value="1"/>
</dbReference>
<dbReference type="InterPro" id="IPR006935">
    <property type="entry name" value="Helicase/UvrB_N"/>
</dbReference>
<dbReference type="InterPro" id="IPR014001">
    <property type="entry name" value="Helicase_ATP-bd"/>
</dbReference>
<dbReference type="InterPro" id="IPR001650">
    <property type="entry name" value="Helicase_C-like"/>
</dbReference>
<dbReference type="InterPro" id="IPR027417">
    <property type="entry name" value="P-loop_NTPase"/>
</dbReference>
<dbReference type="InterPro" id="IPR001943">
    <property type="entry name" value="UVR_dom"/>
</dbReference>
<dbReference type="InterPro" id="IPR036876">
    <property type="entry name" value="UVR_dom_sf"/>
</dbReference>
<dbReference type="InterPro" id="IPR004807">
    <property type="entry name" value="UvrB"/>
</dbReference>
<dbReference type="InterPro" id="IPR041471">
    <property type="entry name" value="UvrB_inter"/>
</dbReference>
<dbReference type="InterPro" id="IPR024759">
    <property type="entry name" value="UvrB_YAD/RRR_dom"/>
</dbReference>
<dbReference type="NCBIfam" id="NF003673">
    <property type="entry name" value="PRK05298.1"/>
    <property type="match status" value="1"/>
</dbReference>
<dbReference type="NCBIfam" id="TIGR00631">
    <property type="entry name" value="uvrb"/>
    <property type="match status" value="1"/>
</dbReference>
<dbReference type="PANTHER" id="PTHR24029">
    <property type="entry name" value="UVRABC SYSTEM PROTEIN B"/>
    <property type="match status" value="1"/>
</dbReference>
<dbReference type="PANTHER" id="PTHR24029:SF0">
    <property type="entry name" value="UVRABC SYSTEM PROTEIN B"/>
    <property type="match status" value="1"/>
</dbReference>
<dbReference type="Pfam" id="PF00271">
    <property type="entry name" value="Helicase_C"/>
    <property type="match status" value="1"/>
</dbReference>
<dbReference type="Pfam" id="PF04851">
    <property type="entry name" value="ResIII"/>
    <property type="match status" value="1"/>
</dbReference>
<dbReference type="Pfam" id="PF02151">
    <property type="entry name" value="UVR"/>
    <property type="match status" value="1"/>
</dbReference>
<dbReference type="Pfam" id="PF12344">
    <property type="entry name" value="UvrB"/>
    <property type="match status" value="1"/>
</dbReference>
<dbReference type="Pfam" id="PF17757">
    <property type="entry name" value="UvrB_inter"/>
    <property type="match status" value="1"/>
</dbReference>
<dbReference type="SMART" id="SM00487">
    <property type="entry name" value="DEXDc"/>
    <property type="match status" value="1"/>
</dbReference>
<dbReference type="SMART" id="SM00490">
    <property type="entry name" value="HELICc"/>
    <property type="match status" value="1"/>
</dbReference>
<dbReference type="SUPFAM" id="SSF46600">
    <property type="entry name" value="C-terminal UvrC-binding domain of UvrB"/>
    <property type="match status" value="1"/>
</dbReference>
<dbReference type="SUPFAM" id="SSF52540">
    <property type="entry name" value="P-loop containing nucleoside triphosphate hydrolases"/>
    <property type="match status" value="2"/>
</dbReference>
<dbReference type="PROSITE" id="PS51192">
    <property type="entry name" value="HELICASE_ATP_BIND_1"/>
    <property type="match status" value="1"/>
</dbReference>
<dbReference type="PROSITE" id="PS51194">
    <property type="entry name" value="HELICASE_CTER"/>
    <property type="match status" value="1"/>
</dbReference>
<dbReference type="PROSITE" id="PS50151">
    <property type="entry name" value="UVR"/>
    <property type="match status" value="1"/>
</dbReference>
<comment type="function">
    <text evidence="1">The UvrABC repair system catalyzes the recognition and processing of DNA lesions. A damage recognition complex composed of 2 UvrA and 2 UvrB subunits scans DNA for abnormalities. Upon binding of the UvrA(2)B(2) complex to a putative damaged site, the DNA wraps around one UvrB monomer. DNA wrap is dependent on ATP binding by UvrB and probably causes local melting of the DNA helix, facilitating insertion of UvrB beta-hairpin between the DNA strands. Then UvrB probes one DNA strand for the presence of a lesion. If a lesion is found the UvrA subunits dissociate and the UvrB-DNA preincision complex is formed. This complex is subsequently bound by UvrC and the second UvrB is released. If no lesion is found, the DNA wraps around the other UvrB subunit that will check the other stand for damage.</text>
</comment>
<comment type="subunit">
    <text evidence="1">Forms a heterotetramer with UvrA during the search for lesions. Interacts with UvrC in an incision complex.</text>
</comment>
<comment type="subcellular location">
    <subcellularLocation>
        <location evidence="1">Cytoplasm</location>
    </subcellularLocation>
</comment>
<comment type="domain">
    <text evidence="1">The beta-hairpin motif is involved in DNA binding.</text>
</comment>
<comment type="similarity">
    <text evidence="1">Belongs to the UvrB family.</text>
</comment>
<organism>
    <name type="scientific">Actinobacillus pleuropneumoniae serotype 5b (strain L20)</name>
    <dbReference type="NCBI Taxonomy" id="416269"/>
    <lineage>
        <taxon>Bacteria</taxon>
        <taxon>Pseudomonadati</taxon>
        <taxon>Pseudomonadota</taxon>
        <taxon>Gammaproteobacteria</taxon>
        <taxon>Pasteurellales</taxon>
        <taxon>Pasteurellaceae</taxon>
        <taxon>Actinobacillus</taxon>
    </lineage>
</organism>
<accession>A3N031</accession>
<feature type="chain" id="PRO_1000077862" description="UvrABC system protein B">
    <location>
        <begin position="1"/>
        <end position="673"/>
    </location>
</feature>
<feature type="domain" description="Helicase ATP-binding" evidence="1">
    <location>
        <begin position="29"/>
        <end position="188"/>
    </location>
</feature>
<feature type="domain" description="Helicase C-terminal" evidence="1">
    <location>
        <begin position="434"/>
        <end position="600"/>
    </location>
</feature>
<feature type="domain" description="UVR" evidence="1">
    <location>
        <begin position="634"/>
        <end position="669"/>
    </location>
</feature>
<feature type="region of interest" description="Disordered" evidence="2">
    <location>
        <begin position="607"/>
        <end position="632"/>
    </location>
</feature>
<feature type="short sequence motif" description="Beta-hairpin">
    <location>
        <begin position="95"/>
        <end position="118"/>
    </location>
</feature>
<feature type="binding site" evidence="1">
    <location>
        <begin position="42"/>
        <end position="49"/>
    </location>
    <ligand>
        <name>ATP</name>
        <dbReference type="ChEBI" id="CHEBI:30616"/>
    </ligand>
</feature>
<evidence type="ECO:0000255" key="1">
    <source>
        <dbReference type="HAMAP-Rule" id="MF_00204"/>
    </source>
</evidence>
<evidence type="ECO:0000256" key="2">
    <source>
        <dbReference type="SAM" id="MobiDB-lite"/>
    </source>
</evidence>
<reference key="1">
    <citation type="journal article" date="2008" name="J. Bacteriol.">
        <title>The complete genome sequence of Actinobacillus pleuropneumoniae L20 (serotype 5b).</title>
        <authorList>
            <person name="Foote S.J."/>
            <person name="Bosse J.T."/>
            <person name="Bouevitch A.B."/>
            <person name="Langford P.R."/>
            <person name="Young N.M."/>
            <person name="Nash J.H.E."/>
        </authorList>
    </citation>
    <scope>NUCLEOTIDE SEQUENCE [LARGE SCALE GENOMIC DNA]</scope>
    <source>
        <strain>L20</strain>
    </source>
</reference>
<keyword id="KW-0067">ATP-binding</keyword>
<keyword id="KW-0963">Cytoplasm</keyword>
<keyword id="KW-0227">DNA damage</keyword>
<keyword id="KW-0228">DNA excision</keyword>
<keyword id="KW-0234">DNA repair</keyword>
<keyword id="KW-0267">Excision nuclease</keyword>
<keyword id="KW-0347">Helicase</keyword>
<keyword id="KW-0378">Hydrolase</keyword>
<keyword id="KW-0547">Nucleotide-binding</keyword>
<keyword id="KW-1185">Reference proteome</keyword>
<keyword id="KW-0742">SOS response</keyword>